<keyword id="KW-0134">Cell wall</keyword>
<keyword id="KW-1015">Disulfide bond</keyword>
<keyword id="KW-0325">Glycoprotein</keyword>
<keyword id="KW-0472">Membrane</keyword>
<keyword id="KW-0964">Secreted</keyword>
<keyword id="KW-0732">Signal</keyword>
<name>EXPB6_ARATH</name>
<reference key="1">
    <citation type="journal article" date="2005" name="Plant J.">
        <title>Use of genomic history to improve phylogeny and understanding of births and deaths in a gene family.</title>
        <authorList>
            <person name="Sampedro J."/>
            <person name="Lee Y."/>
            <person name="Carey R.E."/>
            <person name="Depamphilis C."/>
            <person name="Cosgrove D.J."/>
        </authorList>
    </citation>
    <scope>NUCLEOTIDE SEQUENCE [GENOMIC DNA]</scope>
    <source>
        <strain>cv. Landsberg erecta</strain>
    </source>
</reference>
<reference key="2">
    <citation type="journal article" date="2004" name="Plant Mol. Biol.">
        <title>Nomenclature for members of the expansin superfamily of genes and proteins.</title>
        <authorList>
            <person name="Kende H."/>
            <person name="Bradford K.J."/>
            <person name="Brummell D.A."/>
            <person name="Cho H.-T."/>
            <person name="Cosgrove D.J."/>
            <person name="Fleming A.J."/>
            <person name="Gehring C."/>
            <person name="Lee Y."/>
            <person name="McQueen-Mason S.J."/>
            <person name="Rose J.K.C."/>
            <person name="Voesenek L.A.C."/>
        </authorList>
    </citation>
    <scope>NOMENCLATURE</scope>
</reference>
<reference key="3">
    <citation type="journal article" date="2005" name="Genome Biol.">
        <title>The expansin superfamily.</title>
        <authorList>
            <person name="Sampedro J."/>
            <person name="Cosgrove D.J."/>
        </authorList>
    </citation>
    <scope>REVIEW</scope>
</reference>
<evidence type="ECO:0000250" key="1">
    <source>
        <dbReference type="UniProtKB" id="Q336T5"/>
    </source>
</evidence>
<evidence type="ECO:0000255" key="2"/>
<evidence type="ECO:0000255" key="3">
    <source>
        <dbReference type="PROSITE-ProRule" id="PRU00078"/>
    </source>
</evidence>
<evidence type="ECO:0000255" key="4">
    <source>
        <dbReference type="PROSITE-ProRule" id="PRU00079"/>
    </source>
</evidence>
<evidence type="ECO:0000255" key="5">
    <source>
        <dbReference type="PROSITE-ProRule" id="PRU00498"/>
    </source>
</evidence>
<evidence type="ECO:0000303" key="6">
    <source>
    </source>
</evidence>
<evidence type="ECO:0000305" key="7"/>
<evidence type="ECO:0000305" key="8">
    <source>
    </source>
</evidence>
<dbReference type="EMBL" id="AY619565">
    <property type="protein sequence ID" value="AAT40311.1"/>
    <property type="molecule type" value="Genomic_DNA"/>
</dbReference>
<dbReference type="SMR" id="Q6IVU7"/>
<dbReference type="GlyCosmos" id="Q6IVU7">
    <property type="glycosylation" value="2 sites, No reported glycans"/>
</dbReference>
<dbReference type="GO" id="GO:0005576">
    <property type="term" value="C:extracellular region"/>
    <property type="evidence" value="ECO:0007669"/>
    <property type="project" value="UniProtKB-KW"/>
</dbReference>
<dbReference type="GO" id="GO:0016020">
    <property type="term" value="C:membrane"/>
    <property type="evidence" value="ECO:0007669"/>
    <property type="project" value="UniProtKB-SubCell"/>
</dbReference>
<dbReference type="GO" id="GO:0009653">
    <property type="term" value="P:anatomical structure morphogenesis"/>
    <property type="evidence" value="ECO:0007669"/>
    <property type="project" value="UniProtKB-ARBA"/>
</dbReference>
<dbReference type="GO" id="GO:0009828">
    <property type="term" value="P:plant-type cell wall loosening"/>
    <property type="evidence" value="ECO:0000250"/>
    <property type="project" value="UniProtKB"/>
</dbReference>
<dbReference type="GO" id="GO:0019953">
    <property type="term" value="P:sexual reproduction"/>
    <property type="evidence" value="ECO:0007669"/>
    <property type="project" value="InterPro"/>
</dbReference>
<dbReference type="CDD" id="cd22275">
    <property type="entry name" value="DPBB_EXPB_N"/>
    <property type="match status" value="1"/>
</dbReference>
<dbReference type="Gene3D" id="2.60.40.760">
    <property type="entry name" value="Expansin, cellulose-binding-like domain"/>
    <property type="match status" value="1"/>
</dbReference>
<dbReference type="Gene3D" id="2.40.40.10">
    <property type="entry name" value="RlpA-like domain"/>
    <property type="match status" value="1"/>
</dbReference>
<dbReference type="InterPro" id="IPR007118">
    <property type="entry name" value="Expan_Lol_pI"/>
</dbReference>
<dbReference type="InterPro" id="IPR007112">
    <property type="entry name" value="Expansin/allergen_DPBB_dom"/>
</dbReference>
<dbReference type="InterPro" id="IPR007117">
    <property type="entry name" value="Expansin_CBD"/>
</dbReference>
<dbReference type="InterPro" id="IPR036749">
    <property type="entry name" value="Expansin_CBD_sf"/>
</dbReference>
<dbReference type="InterPro" id="IPR005795">
    <property type="entry name" value="LolPI"/>
</dbReference>
<dbReference type="InterPro" id="IPR009009">
    <property type="entry name" value="RlpA-like_DPBB"/>
</dbReference>
<dbReference type="InterPro" id="IPR036908">
    <property type="entry name" value="RlpA-like_sf"/>
</dbReference>
<dbReference type="PANTHER" id="PTHR31692">
    <property type="entry name" value="EXPANSIN-B3"/>
    <property type="match status" value="1"/>
</dbReference>
<dbReference type="PANTHER" id="PTHR31692:SF106">
    <property type="entry name" value="EXPANSIN-B4-RELATED"/>
    <property type="match status" value="1"/>
</dbReference>
<dbReference type="Pfam" id="PF03330">
    <property type="entry name" value="DPBB_1"/>
    <property type="match status" value="1"/>
</dbReference>
<dbReference type="Pfam" id="PF01357">
    <property type="entry name" value="Expansin_C"/>
    <property type="match status" value="1"/>
</dbReference>
<dbReference type="PRINTS" id="PR01225">
    <property type="entry name" value="EXPANSNFAMLY"/>
</dbReference>
<dbReference type="PRINTS" id="PR00829">
    <property type="entry name" value="LOLP1ALLERGN"/>
</dbReference>
<dbReference type="SMART" id="SM00837">
    <property type="entry name" value="DPBB_1"/>
    <property type="match status" value="1"/>
</dbReference>
<dbReference type="SUPFAM" id="SSF50685">
    <property type="entry name" value="Barwin-like endoglucanases"/>
    <property type="match status" value="1"/>
</dbReference>
<dbReference type="SUPFAM" id="SSF49590">
    <property type="entry name" value="PHL pollen allergen"/>
    <property type="match status" value="1"/>
</dbReference>
<dbReference type="PROSITE" id="PS50843">
    <property type="entry name" value="EXPANSIN_CBD"/>
    <property type="match status" value="1"/>
</dbReference>
<dbReference type="PROSITE" id="PS50842">
    <property type="entry name" value="EXPANSIN_EG45"/>
    <property type="match status" value="1"/>
</dbReference>
<organism>
    <name type="scientific">Arabidopsis thaliana</name>
    <name type="common">Mouse-ear cress</name>
    <dbReference type="NCBI Taxonomy" id="3702"/>
    <lineage>
        <taxon>Eukaryota</taxon>
        <taxon>Viridiplantae</taxon>
        <taxon>Streptophyta</taxon>
        <taxon>Embryophyta</taxon>
        <taxon>Tracheophyta</taxon>
        <taxon>Spermatophyta</taxon>
        <taxon>Magnoliopsida</taxon>
        <taxon>eudicotyledons</taxon>
        <taxon>Gunneridae</taxon>
        <taxon>Pentapetalae</taxon>
        <taxon>rosids</taxon>
        <taxon>malvids</taxon>
        <taxon>Brassicales</taxon>
        <taxon>Brassicaceae</taxon>
        <taxon>Camelineae</taxon>
        <taxon>Arabidopsis</taxon>
    </lineage>
</organism>
<proteinExistence type="inferred from homology"/>
<gene>
    <name evidence="6" type="primary">EXPB6</name>
</gene>
<comment type="function">
    <text evidence="8">May cause loosening and extension of plant cell walls by disrupting non-covalent bonding between cellulose microfibrils and matrix glucans.</text>
</comment>
<comment type="subcellular location">
    <subcellularLocation>
        <location evidence="1">Secreted</location>
        <location evidence="1">Cell wall</location>
    </subcellularLocation>
    <subcellularLocation>
        <location evidence="1">Membrane</location>
        <topology evidence="1">Peripheral membrane protein</topology>
    </subcellularLocation>
</comment>
<comment type="similarity">
    <text evidence="7">Belongs to the expansin family. Expansin B subfamily.</text>
</comment>
<comment type="caution">
    <text evidence="7">Truncated sequence in cv. Columbia (AC F4IBJ3) N-terminus compared to cv. Landsberg erecta (AC Q6IVU7) and other members of the expansin B subfamily.</text>
</comment>
<accession>Q6IVU7</accession>
<feature type="signal peptide" evidence="2">
    <location>
        <begin position="1"/>
        <end position="24"/>
    </location>
</feature>
<feature type="chain" id="PRO_5004274681" description="Expansin-B6" evidence="2">
    <location>
        <begin position="25"/>
        <end position="259"/>
    </location>
</feature>
<feature type="domain" description="Expansin-like EG45" evidence="4">
    <location>
        <begin position="52"/>
        <end position="160"/>
    </location>
</feature>
<feature type="domain" description="Expansin-like CBD" evidence="3">
    <location>
        <begin position="173"/>
        <end position="254"/>
    </location>
</feature>
<feature type="glycosylation site" description="N-linked (GlcNAc...) asparagine" evidence="5">
    <location>
        <position position="26"/>
    </location>
</feature>
<feature type="glycosylation site" description="N-linked (GlcNAc...) asparagine" evidence="5">
    <location>
        <position position="249"/>
    </location>
</feature>
<feature type="disulfide bond" evidence="4">
    <location>
        <begin position="55"/>
        <end position="82"/>
    </location>
</feature>
<feature type="disulfide bond" evidence="4">
    <location>
        <begin position="85"/>
        <end position="155"/>
    </location>
</feature>
<feature type="disulfide bond" evidence="4">
    <location>
        <begin position="90"/>
        <end position="96"/>
    </location>
</feature>
<sequence length="259" mass="27697">MASSSHRYFALLALFAVSLKFCYCQNETTDGAGWGTAGVTWYGEPLGAGSTGGACGFAVANPPLYGMVSAGGPSVFNNGIGCGTCFQILCNGHPACSRRPITVTITDECPGGPCASEPAHFDLSGKAMGALARPGQGDRLRSAGVLRVYYIRVECLYRRTNIAFRMDPGANPYYISFVVEYENGDGDLAYTEIQPAGGTFIPMQEMRSAVWKVNSGSPLTGPFNIRLTSAESHNVVVAYNVIPANWKPNETYRSVVNFK</sequence>
<protein>
    <recommendedName>
        <fullName evidence="6">Expansin-B6</fullName>
        <shortName evidence="6">At-EXPB6</shortName>
        <shortName evidence="6">AtEXPB6</shortName>
    </recommendedName>
    <alternativeName>
        <fullName evidence="6">Beta-expansin-6</fullName>
    </alternativeName>
</protein>